<gene>
    <name evidence="1" type="primary">ugtP</name>
    <name type="ordered locus">BAA_0572</name>
</gene>
<sequence length="388" mass="43761">MIKNPKVLILTAHYGNGHVQVAKTLEQTFRQKGIKDVIVCDLFGESHPVITDITKYLYLKSYTIGKELYRLFYYGVEKIYDKKIASWYANFGRKRLKLLLQAEKPDIVINTFPIIAVPELKKQTGISIPVYNVLTDFCVHKIWIHREVDRYFVATDHVKKVMVDIGVPAEQIVETGIPIRSSFELKINPDIIYNKYQLCKNKKILLIVAGAHGVLGSVKELCQSFMSVPDLQVVVVCGKNEALKQDLVGVQETNPDALKVFGYVENIDELFRVTSCMITKPGGITLSEAAALQVPVILYKPVPGQENENAMYFERKGAAVVIRDDSEVFAKTEALLQDDMKLLQMKEAMKSIYRPEPADHIVDTILAENHVEPNHIPIKSPALAQSFT</sequence>
<protein>
    <recommendedName>
        <fullName evidence="1">Processive diacylglycerol beta-glucosyltransferase</fullName>
        <ecNumber>2.4.1.315</ecNumber>
    </recommendedName>
    <alternativeName>
        <fullName evidence="1">Beta-diglucosyldiacylglycerol synthase</fullName>
        <shortName evidence="1">Beta-DGS</shortName>
        <shortName evidence="1">DGlcDAG synthase</shortName>
        <shortName evidence="1">Glc2-DAG synthase</shortName>
    </alternativeName>
    <alternativeName>
        <fullName evidence="1">Beta-gentiobiosyldiacylglycerol synthase</fullName>
    </alternativeName>
    <alternativeName>
        <fullName evidence="1">Beta-monoglucosyldiacylglycerol synthase</fullName>
        <shortName evidence="1">Beta-MGS</shortName>
        <shortName evidence="1">MGlcDAG synthase</shortName>
    </alternativeName>
    <alternativeName>
        <fullName evidence="1">Beta-triglucosyldiacylglycerol synthase</fullName>
        <shortName evidence="1">TGlcDAG synthase</shortName>
    </alternativeName>
    <alternativeName>
        <fullName>Diglucosyl diacylglycerol synthase (1,6-linking)</fullName>
    </alternativeName>
    <alternativeName>
        <fullName evidence="1">Glucosyl-beta-1,6-glucosyldiacylglycerol synthase</fullName>
    </alternativeName>
    <alternativeName>
        <fullName evidence="1">UDP glucosyltransferase</fullName>
    </alternativeName>
    <alternativeName>
        <fullName evidence="1">UDP-glucose:1,2-diacylglycerol-3-beta-D-glucosyltransferase</fullName>
    </alternativeName>
</protein>
<dbReference type="EC" id="2.4.1.315"/>
<dbReference type="EMBL" id="CP001598">
    <property type="protein sequence ID" value="ACQ49388.1"/>
    <property type="molecule type" value="Genomic_DNA"/>
</dbReference>
<dbReference type="RefSeq" id="WP_000594708.1">
    <property type="nucleotide sequence ID" value="NC_012659.1"/>
</dbReference>
<dbReference type="SMR" id="C3PCX2"/>
<dbReference type="CAZy" id="GT28">
    <property type="family name" value="Glycosyltransferase Family 28"/>
</dbReference>
<dbReference type="GeneID" id="45020560"/>
<dbReference type="KEGG" id="bai:BAA_0572"/>
<dbReference type="HOGENOM" id="CLU_028367_0_1_9"/>
<dbReference type="UniPathway" id="UPA00894"/>
<dbReference type="GO" id="GO:0005886">
    <property type="term" value="C:plasma membrane"/>
    <property type="evidence" value="ECO:0007669"/>
    <property type="project" value="UniProtKB-SubCell"/>
</dbReference>
<dbReference type="GO" id="GO:0047228">
    <property type="term" value="F:1,2-diacylglycerol 3-glucosyltransferase activity"/>
    <property type="evidence" value="ECO:0007669"/>
    <property type="project" value="UniProtKB-UniRule"/>
</dbReference>
<dbReference type="GO" id="GO:0009246">
    <property type="term" value="P:enterobacterial common antigen biosynthetic process"/>
    <property type="evidence" value="ECO:0007669"/>
    <property type="project" value="UniProtKB-UniPathway"/>
</dbReference>
<dbReference type="GO" id="GO:0009247">
    <property type="term" value="P:glycolipid biosynthetic process"/>
    <property type="evidence" value="ECO:0007669"/>
    <property type="project" value="UniProtKB-UniRule"/>
</dbReference>
<dbReference type="GO" id="GO:0070395">
    <property type="term" value="P:lipoteichoic acid biosynthetic process"/>
    <property type="evidence" value="ECO:0007669"/>
    <property type="project" value="UniProtKB-UniRule"/>
</dbReference>
<dbReference type="CDD" id="cd17507">
    <property type="entry name" value="GT28_Beta-DGS-like"/>
    <property type="match status" value="1"/>
</dbReference>
<dbReference type="Gene3D" id="3.40.50.2000">
    <property type="entry name" value="Glycogen Phosphorylase B"/>
    <property type="match status" value="1"/>
</dbReference>
<dbReference type="HAMAP" id="MF_01280">
    <property type="entry name" value="Diacylglyc_glucosyltr"/>
    <property type="match status" value="1"/>
</dbReference>
<dbReference type="InterPro" id="IPR009695">
    <property type="entry name" value="Diacylglyc_glucosyltr_N"/>
</dbReference>
<dbReference type="InterPro" id="IPR007235">
    <property type="entry name" value="Glyco_trans_28_C"/>
</dbReference>
<dbReference type="InterPro" id="IPR050519">
    <property type="entry name" value="Glycosyltransf_28_UgtP"/>
</dbReference>
<dbReference type="InterPro" id="IPR023589">
    <property type="entry name" value="Pro_diacylglycrl_glcsylTrfase"/>
</dbReference>
<dbReference type="NCBIfam" id="NF010135">
    <property type="entry name" value="PRK13609.1"/>
    <property type="match status" value="1"/>
</dbReference>
<dbReference type="PANTHER" id="PTHR43025">
    <property type="entry name" value="MONOGALACTOSYLDIACYLGLYCEROL SYNTHASE"/>
    <property type="match status" value="1"/>
</dbReference>
<dbReference type="PANTHER" id="PTHR43025:SF3">
    <property type="entry name" value="MONOGALACTOSYLDIACYLGLYCEROL SYNTHASE 1, CHLOROPLASTIC"/>
    <property type="match status" value="1"/>
</dbReference>
<dbReference type="Pfam" id="PF04101">
    <property type="entry name" value="Glyco_tran_28_C"/>
    <property type="match status" value="1"/>
</dbReference>
<dbReference type="Pfam" id="PF06925">
    <property type="entry name" value="MGDG_synth"/>
    <property type="match status" value="1"/>
</dbReference>
<dbReference type="SUPFAM" id="SSF53756">
    <property type="entry name" value="UDP-Glycosyltransferase/glycogen phosphorylase"/>
    <property type="match status" value="1"/>
</dbReference>
<accession>C3PCX2</accession>
<comment type="function">
    <text evidence="1">Processive glucosyltransferase involved in the biosynthesis of both the bilayer- and non-bilayer-forming membrane glucolipids. Is able to successively transfer up to three glucosyl residues to diacylglycerol (DAG), thereby catalyzing the formation of beta-monoglucosyl-DAG (3-O-(beta-D-glucopyranosyl)-1,2-diacyl-sn-glycerol), beta-diglucosyl-DAG (3-O-(beta-D-glucopyranosyl-beta-(1-&gt;6)-D-glucopyranosyl)-1,2-diacyl-sn-glycerol) and beta-triglucosyl-DAG (3-O-(beta-D-glucopyranosyl-beta-(1-&gt;6)-D-glucopyranosyl-beta-(1-&gt;6)-D-glucopyranosyl)-1,2-diacyl-sn-glycerol). Beta-diglucosyl-DAG is the predominant glycolipid found in Bacillales and is also used as a membrane anchor for lipoteichoic acid (LTA).</text>
</comment>
<comment type="catalytic activity">
    <reaction>
        <text>a 1,2-diacyl-3-O-(beta-D-glucopyranosyl)-sn-glycerol + UDP-alpha-D-glucose = a 1,2-diacyl-3-O-(beta-D-Glc-(1-&gt;6)-beta-D-Glc)-sn-glycerol + UDP + H(+)</text>
        <dbReference type="Rhea" id="RHEA:39031"/>
        <dbReference type="ChEBI" id="CHEBI:15378"/>
        <dbReference type="ChEBI" id="CHEBI:58223"/>
        <dbReference type="ChEBI" id="CHEBI:58885"/>
        <dbReference type="ChEBI" id="CHEBI:75799"/>
        <dbReference type="ChEBI" id="CHEBI:76264"/>
        <dbReference type="EC" id="2.4.1.315"/>
    </reaction>
</comment>
<comment type="catalytic activity">
    <reaction>
        <text>a 1,2-diacyl-3-O-(beta-D-Glc-(1-&gt;6)-beta-D-Glc)-sn-glycerol + UDP-alpha-D-glucose = a 1,2-diacyl-3-O-(beta-D-Glc-(1-&gt;6)-beta-D-Glc-(1-&gt;6)-beta-D-Glc)-sn-glycerol + UDP + H(+)</text>
        <dbReference type="Rhea" id="RHEA:39027"/>
        <dbReference type="ChEBI" id="CHEBI:15378"/>
        <dbReference type="ChEBI" id="CHEBI:58223"/>
        <dbReference type="ChEBI" id="CHEBI:58885"/>
        <dbReference type="ChEBI" id="CHEBI:76264"/>
        <dbReference type="ChEBI" id="CHEBI:76265"/>
        <dbReference type="EC" id="2.4.1.315"/>
    </reaction>
</comment>
<comment type="catalytic activity">
    <reaction evidence="1">
        <text>a 1,2-diacyl-sn-glycerol + UDP-alpha-D-glucose = a 1,2-diacyl-3-O-(beta-D-glucopyranosyl)-sn-glycerol + UDP + H(+)</text>
        <dbReference type="Rhea" id="RHEA:17285"/>
        <dbReference type="ChEBI" id="CHEBI:15378"/>
        <dbReference type="ChEBI" id="CHEBI:17815"/>
        <dbReference type="ChEBI" id="CHEBI:58223"/>
        <dbReference type="ChEBI" id="CHEBI:58885"/>
        <dbReference type="ChEBI" id="CHEBI:75799"/>
    </reaction>
</comment>
<comment type="pathway">
    <text evidence="1">Glycolipid metabolism; diglucosyl-diacylglycerol biosynthesis.</text>
</comment>
<comment type="subcellular location">
    <subcellularLocation>
        <location evidence="1">Cell membrane</location>
    </subcellularLocation>
</comment>
<comment type="similarity">
    <text evidence="1">Belongs to the glycosyltransferase 28 family. UgtP subfamily.</text>
</comment>
<keyword id="KW-0119">Carbohydrate metabolism</keyword>
<keyword id="KW-1003">Cell membrane</keyword>
<keyword id="KW-0328">Glycosyltransferase</keyword>
<keyword id="KW-0444">Lipid biosynthesis</keyword>
<keyword id="KW-0443">Lipid metabolism</keyword>
<keyword id="KW-0472">Membrane</keyword>
<keyword id="KW-0808">Transferase</keyword>
<reference key="1">
    <citation type="submission" date="2009-04" db="EMBL/GenBank/DDBJ databases">
        <title>Genome sequence of Bacillus anthracis A0248.</title>
        <authorList>
            <person name="Dodson R.J."/>
            <person name="Munk A.C."/>
            <person name="Bruce D."/>
            <person name="Detter C."/>
            <person name="Tapia R."/>
            <person name="Sutton G."/>
            <person name="Sims D."/>
            <person name="Brettin T."/>
        </authorList>
    </citation>
    <scope>NUCLEOTIDE SEQUENCE [LARGE SCALE GENOMIC DNA]</scope>
    <source>
        <strain>A0248</strain>
    </source>
</reference>
<feature type="chain" id="PRO_1000165231" description="Processive diacylglycerol beta-glucosyltransferase">
    <location>
        <begin position="1"/>
        <end position="388"/>
    </location>
</feature>
<proteinExistence type="inferred from homology"/>
<organism>
    <name type="scientific">Bacillus anthracis (strain A0248)</name>
    <dbReference type="NCBI Taxonomy" id="592021"/>
    <lineage>
        <taxon>Bacteria</taxon>
        <taxon>Bacillati</taxon>
        <taxon>Bacillota</taxon>
        <taxon>Bacilli</taxon>
        <taxon>Bacillales</taxon>
        <taxon>Bacillaceae</taxon>
        <taxon>Bacillus</taxon>
        <taxon>Bacillus cereus group</taxon>
    </lineage>
</organism>
<name>UGTP_BACAA</name>
<evidence type="ECO:0000255" key="1">
    <source>
        <dbReference type="HAMAP-Rule" id="MF_01280"/>
    </source>
</evidence>